<keyword id="KW-0025">Alternative splicing</keyword>
<keyword id="KW-0067">ATP-binding</keyword>
<keyword id="KW-0963">Cytoplasm</keyword>
<keyword id="KW-0418">Kinase</keyword>
<keyword id="KW-0547">Nucleotide-binding</keyword>
<keyword id="KW-0597">Phosphoprotein</keyword>
<keyword id="KW-1185">Reference proteome</keyword>
<keyword id="KW-0723">Serine/threonine-protein kinase</keyword>
<keyword id="KW-0808">Transferase</keyword>
<gene>
    <name type="primary">pmk-2</name>
    <name type="ORF">F42G8.3</name>
</gene>
<reference evidence="4" key="1">
    <citation type="journal article" date="2001" name="Mol. Cell Biol. Res. Commun.">
        <title>Isolation and characterization of pmk-(1-3): three p38 homologs in Caenorhabditis elegans.</title>
        <authorList>
            <person name="Berman K."/>
            <person name="McKay J."/>
            <person name="Avery L."/>
            <person name="Cobb M."/>
        </authorList>
    </citation>
    <scope>NUCLEOTIDE SEQUENCE [GENOMIC DNA] (ISOFORM A)</scope>
    <scope>FUNCTION</scope>
    <scope>SUBCELLULAR LOCATION</scope>
    <scope>ACTIVITY REGULATION</scope>
    <source>
        <strain>Bristol N2</strain>
    </source>
</reference>
<reference key="2">
    <citation type="journal article" date="1998" name="Science">
        <title>Genome sequence of the nematode C. elegans: a platform for investigating biology.</title>
        <authorList>
            <consortium name="The C. elegans sequencing consortium"/>
        </authorList>
    </citation>
    <scope>NUCLEOTIDE SEQUENCE [LARGE SCALE GENOMIC DNA]</scope>
    <scope>ALTERNATIVE SPLICING</scope>
    <source>
        <strain>Bristol N2</strain>
    </source>
</reference>
<protein>
    <recommendedName>
        <fullName>Mitogen-activated protein kinase pmk-2</fullName>
        <ecNumber>2.7.11.24</ecNumber>
    </recommendedName>
    <alternativeName>
        <fullName>Stress-activated protein kinase pmk-2</fullName>
    </alternativeName>
    <alternativeName>
        <fullName>p38 MAP kinase 2</fullName>
    </alternativeName>
</protein>
<accession>Q8MXI4</accession>
<accession>Q8MXI3</accession>
<evidence type="ECO:0000250" key="1"/>
<evidence type="ECO:0000255" key="2">
    <source>
        <dbReference type="PROSITE-ProRule" id="PRU00159"/>
    </source>
</evidence>
<evidence type="ECO:0000269" key="3">
    <source>
    </source>
</evidence>
<evidence type="ECO:0000305" key="4"/>
<organism>
    <name type="scientific">Caenorhabditis elegans</name>
    <dbReference type="NCBI Taxonomy" id="6239"/>
    <lineage>
        <taxon>Eukaryota</taxon>
        <taxon>Metazoa</taxon>
        <taxon>Ecdysozoa</taxon>
        <taxon>Nematoda</taxon>
        <taxon>Chromadorea</taxon>
        <taxon>Rhabditida</taxon>
        <taxon>Rhabditina</taxon>
        <taxon>Rhabditomorpha</taxon>
        <taxon>Rhabditoidea</taxon>
        <taxon>Rhabditidae</taxon>
        <taxon>Peloderinae</taxon>
        <taxon>Caenorhabditis</taxon>
    </lineage>
</organism>
<feature type="chain" id="PRO_0000186304" description="Mitogen-activated protein kinase pmk-2">
    <location>
        <begin position="1"/>
        <end position="419"/>
    </location>
</feature>
<feature type="domain" description="Protein kinase" evidence="2">
    <location>
        <begin position="49"/>
        <end position="350"/>
    </location>
</feature>
<feature type="short sequence motif" description="TXY">
    <location>
        <begin position="222"/>
        <end position="224"/>
    </location>
</feature>
<feature type="active site" description="Proton acceptor" evidence="2">
    <location>
        <position position="210"/>
    </location>
</feature>
<feature type="binding site" evidence="2">
    <location>
        <begin position="55"/>
        <end position="63"/>
    </location>
    <ligand>
        <name>ATP</name>
        <dbReference type="ChEBI" id="CHEBI:30616"/>
    </ligand>
</feature>
<feature type="binding site" evidence="2">
    <location>
        <position position="78"/>
    </location>
    <ligand>
        <name>ATP</name>
        <dbReference type="ChEBI" id="CHEBI:30616"/>
    </ligand>
</feature>
<feature type="modified residue" description="Phosphothreonine" evidence="1">
    <location>
        <position position="222"/>
    </location>
</feature>
<feature type="modified residue" description="Phosphotyrosine" evidence="1">
    <location>
        <position position="224"/>
    </location>
</feature>
<feature type="splice variant" id="VSP_009272" description="In isoform b." evidence="4">
    <location>
        <begin position="190"/>
        <end position="206"/>
    </location>
</feature>
<feature type="splice variant" id="VSP_050273" description="In isoform b." evidence="4">
    <location>
        <begin position="366"/>
        <end position="370"/>
    </location>
</feature>
<name>PMK2_CAEEL</name>
<comment type="function">
    <text evidence="3">Responds to activation by environmental stress and pro-inflammatory cytokines by phosphorylating downstream targets.</text>
</comment>
<comment type="catalytic activity">
    <reaction evidence="3">
        <text>L-seryl-[protein] + ATP = O-phospho-L-seryl-[protein] + ADP + H(+)</text>
        <dbReference type="Rhea" id="RHEA:17989"/>
        <dbReference type="Rhea" id="RHEA-COMP:9863"/>
        <dbReference type="Rhea" id="RHEA-COMP:11604"/>
        <dbReference type="ChEBI" id="CHEBI:15378"/>
        <dbReference type="ChEBI" id="CHEBI:29999"/>
        <dbReference type="ChEBI" id="CHEBI:30616"/>
        <dbReference type="ChEBI" id="CHEBI:83421"/>
        <dbReference type="ChEBI" id="CHEBI:456216"/>
        <dbReference type="EC" id="2.7.11.24"/>
    </reaction>
</comment>
<comment type="catalytic activity">
    <reaction evidence="3">
        <text>L-threonyl-[protein] + ATP = O-phospho-L-threonyl-[protein] + ADP + H(+)</text>
        <dbReference type="Rhea" id="RHEA:46608"/>
        <dbReference type="Rhea" id="RHEA-COMP:11060"/>
        <dbReference type="Rhea" id="RHEA-COMP:11605"/>
        <dbReference type="ChEBI" id="CHEBI:15378"/>
        <dbReference type="ChEBI" id="CHEBI:30013"/>
        <dbReference type="ChEBI" id="CHEBI:30616"/>
        <dbReference type="ChEBI" id="CHEBI:61977"/>
        <dbReference type="ChEBI" id="CHEBI:456216"/>
        <dbReference type="EC" id="2.7.11.24"/>
    </reaction>
</comment>
<comment type="cofactor">
    <cofactor evidence="3">
        <name>Mg(2+)</name>
        <dbReference type="ChEBI" id="CHEBI:18420"/>
    </cofactor>
</comment>
<comment type="activity regulation">
    <text evidence="3">Activated by phosphorylation on threonine and tyrosine. Inhibited by pyridinyl-imidazole related compounds.</text>
</comment>
<comment type="subcellular location">
    <subcellularLocation>
        <location evidence="3">Cytoplasm</location>
    </subcellularLocation>
</comment>
<comment type="alternative products">
    <event type="alternative splicing"/>
    <isoform>
        <id>Q8MXI4-1</id>
        <name evidence="4">a</name>
        <sequence type="displayed"/>
    </isoform>
    <isoform>
        <id>Q8MXI4-2</id>
        <name evidence="4">b</name>
        <sequence type="described" ref="VSP_009272 VSP_050273"/>
    </isoform>
</comment>
<comment type="domain">
    <text>The TXY motif contains the threonine and tyrosine residues whose phosphorylation activates the MAP kinases.</text>
</comment>
<comment type="PTM">
    <text evidence="1">Dually phosphorylated on Thr-222 and Tyr-224, which activates the enzyme.</text>
</comment>
<comment type="similarity">
    <text evidence="4">Belongs to the protein kinase superfamily. CMGC Ser/Thr protein kinase family. MAP kinase subfamily.</text>
</comment>
<sequence>MGMSATMGDSASIPGVFFADFGPAPPEITPEGYHEVELNKTKWVLPQWYNSLKPLGEGAYGVVCTAEYEPTGDRVAIKKFFRPFQSTIHAKRTYRELKLLRTLQHDNVLEMIDVFTPDPDASSLNNVYFVSVLMGSDLQNIMKIQRLTDEQIQLLIYQVLRGLKYIHSAGIIHRDLKPSNIAVNERCEVKVFLSFSQLSFLILSFFKILDFGLARAQDAEMTGYVATRWYRAPEIMLNWMHYTQTVDVWSVGCILAELVSGRPLFPGDDHIDQLTKIMSVVGTPKEEFWSKIQSEEARNYIKNRSPIIRQDFVTLFPMASPYALELLEMMLILDPDRRISVSSALRHDYLREYSVPNDEPVAMDTVINSIVTIDPAEERATTLSDWRELIWNEIRLFQNSARRLSFVSCTDTEEEPMKI</sequence>
<proteinExistence type="inferred from homology"/>
<dbReference type="EC" id="2.7.11.24"/>
<dbReference type="EMBL" id="FO080126">
    <property type="protein sequence ID" value="CCD61402.1"/>
    <property type="molecule type" value="Genomic_DNA"/>
</dbReference>
<dbReference type="EMBL" id="FO080126">
    <property type="protein sequence ID" value="CCD61403.1"/>
    <property type="molecule type" value="Genomic_DNA"/>
</dbReference>
<dbReference type="RefSeq" id="NP_741457.2">
    <property type="nucleotide sequence ID" value="NM_171392.5"/>
</dbReference>
<dbReference type="RefSeq" id="NP_741458.2">
    <molecule id="Q8MXI4-2"/>
    <property type="nucleotide sequence ID" value="NM_171913.6"/>
</dbReference>
<dbReference type="SMR" id="Q8MXI4"/>
<dbReference type="BioGRID" id="42724">
    <property type="interactions" value="3"/>
</dbReference>
<dbReference type="DIP" id="DIP-24927N"/>
<dbReference type="FunCoup" id="Q8MXI4">
    <property type="interactions" value="469"/>
</dbReference>
<dbReference type="IntAct" id="Q8MXI4">
    <property type="interactions" value="1"/>
</dbReference>
<dbReference type="STRING" id="6239.F42G8.3a.1"/>
<dbReference type="PaxDb" id="6239-F42G8.3a"/>
<dbReference type="PeptideAtlas" id="Q8MXI4"/>
<dbReference type="EnsemblMetazoa" id="F42G8.3a.1">
    <property type="protein sequence ID" value="F42G8.3a.1"/>
    <property type="gene ID" value="WBGene00004056"/>
</dbReference>
<dbReference type="EnsemblMetazoa" id="F42G8.3b.1">
    <molecule id="Q8MXI4-2"/>
    <property type="protein sequence ID" value="F42G8.3b.1"/>
    <property type="gene ID" value="WBGene00004056"/>
</dbReference>
<dbReference type="GeneID" id="177611"/>
<dbReference type="KEGG" id="cel:CELE_F42G8.3"/>
<dbReference type="UCSC" id="F42G8.3a">
    <molecule id="Q8MXI4-1"/>
    <property type="organism name" value="c. elegans"/>
</dbReference>
<dbReference type="AGR" id="WB:WBGene00004056"/>
<dbReference type="CTD" id="177611"/>
<dbReference type="WormBase" id="F42G8.3a">
    <property type="protein sequence ID" value="CE49565"/>
    <property type="gene ID" value="WBGene00004056"/>
    <property type="gene designation" value="pmk-2"/>
</dbReference>
<dbReference type="WormBase" id="F42G8.3b">
    <molecule id="Q8MXI4-2"/>
    <property type="protein sequence ID" value="CE34862"/>
    <property type="gene ID" value="WBGene00004056"/>
    <property type="gene designation" value="pmk-2"/>
</dbReference>
<dbReference type="eggNOG" id="KOG0660">
    <property type="taxonomic scope" value="Eukaryota"/>
</dbReference>
<dbReference type="HOGENOM" id="CLU_000288_181_1_1"/>
<dbReference type="InParanoid" id="Q8MXI4"/>
<dbReference type="OrthoDB" id="192887at2759"/>
<dbReference type="PhylomeDB" id="Q8MXI4"/>
<dbReference type="BRENDA" id="2.7.11.24">
    <property type="organism ID" value="1045"/>
</dbReference>
<dbReference type="Reactome" id="R-CEL-168638">
    <property type="pathway name" value="NOD1/2 Signaling Pathway"/>
</dbReference>
<dbReference type="Reactome" id="R-CEL-171007">
    <property type="pathway name" value="p38MAPK events"/>
</dbReference>
<dbReference type="Reactome" id="R-CEL-198753">
    <property type="pathway name" value="ERK/MAPK targets"/>
</dbReference>
<dbReference type="Reactome" id="R-CEL-2559580">
    <property type="pathway name" value="Oxidative Stress Induced Senescence"/>
</dbReference>
<dbReference type="Reactome" id="R-CEL-418592">
    <property type="pathway name" value="ADP signalling through P2Y purinoceptor 1"/>
</dbReference>
<dbReference type="Reactome" id="R-CEL-432142">
    <property type="pathway name" value="Platelet sensitization by LDL"/>
</dbReference>
<dbReference type="Reactome" id="R-CEL-4420097">
    <property type="pathway name" value="VEGFA-VEGFR2 Pathway"/>
</dbReference>
<dbReference type="Reactome" id="R-CEL-450302">
    <property type="pathway name" value="activated TAK1 mediates p38 MAPK activation"/>
</dbReference>
<dbReference type="Reactome" id="R-CEL-450341">
    <property type="pathway name" value="Activation of the AP-1 family of transcription factors"/>
</dbReference>
<dbReference type="Reactome" id="R-CEL-525793">
    <property type="pathway name" value="Myogenesis"/>
</dbReference>
<dbReference type="Reactome" id="R-CEL-5675221">
    <property type="pathway name" value="Negative regulation of MAPK pathway"/>
</dbReference>
<dbReference type="Reactome" id="R-CEL-6798695">
    <property type="pathway name" value="Neutrophil degranulation"/>
</dbReference>
<dbReference type="PRO" id="PR:Q8MXI4"/>
<dbReference type="Proteomes" id="UP000001940">
    <property type="component" value="Chromosome IV"/>
</dbReference>
<dbReference type="Bgee" id="WBGene00004056">
    <property type="expression patterns" value="Expressed in embryo and 3 other cell types or tissues"/>
</dbReference>
<dbReference type="ExpressionAtlas" id="Q8MXI4">
    <property type="expression patterns" value="baseline and differential"/>
</dbReference>
<dbReference type="GO" id="GO:0005737">
    <property type="term" value="C:cytoplasm"/>
    <property type="evidence" value="ECO:0000314"/>
    <property type="project" value="UniProtKB"/>
</dbReference>
<dbReference type="GO" id="GO:0005634">
    <property type="term" value="C:nucleus"/>
    <property type="evidence" value="ECO:0000318"/>
    <property type="project" value="GO_Central"/>
</dbReference>
<dbReference type="GO" id="GO:0005524">
    <property type="term" value="F:ATP binding"/>
    <property type="evidence" value="ECO:0007669"/>
    <property type="project" value="UniProtKB-KW"/>
</dbReference>
<dbReference type="GO" id="GO:0004707">
    <property type="term" value="F:MAP kinase activity"/>
    <property type="evidence" value="ECO:0000314"/>
    <property type="project" value="UniProtKB"/>
</dbReference>
<dbReference type="GO" id="GO:0106310">
    <property type="term" value="F:protein serine kinase activity"/>
    <property type="evidence" value="ECO:0007669"/>
    <property type="project" value="RHEA"/>
</dbReference>
<dbReference type="GO" id="GO:0004674">
    <property type="term" value="F:protein serine/threonine kinase activity"/>
    <property type="evidence" value="ECO:0000318"/>
    <property type="project" value="GO_Central"/>
</dbReference>
<dbReference type="GO" id="GO:0035556">
    <property type="term" value="P:intracellular signal transduction"/>
    <property type="evidence" value="ECO:0000314"/>
    <property type="project" value="UniProtKB"/>
</dbReference>
<dbReference type="GO" id="GO:0006970">
    <property type="term" value="P:response to osmotic stress"/>
    <property type="evidence" value="ECO:0000314"/>
    <property type="project" value="UniProtKB"/>
</dbReference>
<dbReference type="FunFam" id="1.10.510.10:FF:000684">
    <property type="entry name" value="Mitogen-activated protein kinase"/>
    <property type="match status" value="1"/>
</dbReference>
<dbReference type="FunFam" id="3.30.200.20:FF:000769">
    <property type="entry name" value="Mitogen-activated protein kinase 14"/>
    <property type="match status" value="1"/>
</dbReference>
<dbReference type="Gene3D" id="3.30.200.20">
    <property type="entry name" value="Phosphorylase Kinase, domain 1"/>
    <property type="match status" value="1"/>
</dbReference>
<dbReference type="Gene3D" id="1.10.510.10">
    <property type="entry name" value="Transferase(Phosphotransferase) domain 1"/>
    <property type="match status" value="1"/>
</dbReference>
<dbReference type="InterPro" id="IPR011009">
    <property type="entry name" value="Kinase-like_dom_sf"/>
</dbReference>
<dbReference type="InterPro" id="IPR050117">
    <property type="entry name" value="MAP_kinase"/>
</dbReference>
<dbReference type="InterPro" id="IPR003527">
    <property type="entry name" value="MAP_kinase_CS"/>
</dbReference>
<dbReference type="InterPro" id="IPR008352">
    <property type="entry name" value="MAPK_p38-like"/>
</dbReference>
<dbReference type="InterPro" id="IPR000719">
    <property type="entry name" value="Prot_kinase_dom"/>
</dbReference>
<dbReference type="InterPro" id="IPR017441">
    <property type="entry name" value="Protein_kinase_ATP_BS"/>
</dbReference>
<dbReference type="PANTHER" id="PTHR24055">
    <property type="entry name" value="MITOGEN-ACTIVATED PROTEIN KINASE"/>
    <property type="match status" value="1"/>
</dbReference>
<dbReference type="Pfam" id="PF00069">
    <property type="entry name" value="Pkinase"/>
    <property type="match status" value="1"/>
</dbReference>
<dbReference type="PRINTS" id="PR01773">
    <property type="entry name" value="P38MAPKINASE"/>
</dbReference>
<dbReference type="SMART" id="SM00220">
    <property type="entry name" value="S_TKc"/>
    <property type="match status" value="1"/>
</dbReference>
<dbReference type="SUPFAM" id="SSF56112">
    <property type="entry name" value="Protein kinase-like (PK-like)"/>
    <property type="match status" value="1"/>
</dbReference>
<dbReference type="PROSITE" id="PS01351">
    <property type="entry name" value="MAPK"/>
    <property type="match status" value="1"/>
</dbReference>
<dbReference type="PROSITE" id="PS00107">
    <property type="entry name" value="PROTEIN_KINASE_ATP"/>
    <property type="match status" value="1"/>
</dbReference>
<dbReference type="PROSITE" id="PS50011">
    <property type="entry name" value="PROTEIN_KINASE_DOM"/>
    <property type="match status" value="1"/>
</dbReference>